<accession>Q66CI9</accession>
<sequence length="361" mass="39991">MTQVYNFSAGPAMLPVEVLRRAEQELRNWHGLGTSVMEISHRSKEFMQVAEESEKDLRDLLQIPANYKVLFCHGGARAQFAAVPLNLLGDSNSADYIDGGYWAHSAVKEAQKYCTPHVIDVTTHDNGLTGIQPMKQWKLSDNAAYVHYCPNETIDGVAINEQPDFGNKVVVADYSSAILSRPIDISRYGVIYAGAQKNIGPAGLTLVIVREDLLGKAHTALPSILDYKVLADNDSMFNTPPTFAWYLSGLVFKWLKEQGGLGEMEKRNQAKAELLYGAIDRTGFYRNQVAIANRSWMNVPFQMAEASLDKLFLSEAEAQGLQALKGHRVAGGMRASIYNAMPIEGVKALTDFMADFERRHG</sequence>
<protein>
    <recommendedName>
        <fullName evidence="1">Phosphoserine aminotransferase</fullName>
        <ecNumber evidence="1">2.6.1.52</ecNumber>
    </recommendedName>
    <alternativeName>
        <fullName evidence="1">Phosphohydroxythreonine aminotransferase</fullName>
        <shortName evidence="1">PSAT</shortName>
    </alternativeName>
</protein>
<reference key="1">
    <citation type="journal article" date="2004" name="Proc. Natl. Acad. Sci. U.S.A.">
        <title>Insights into the evolution of Yersinia pestis through whole-genome comparison with Yersinia pseudotuberculosis.</title>
        <authorList>
            <person name="Chain P.S.G."/>
            <person name="Carniel E."/>
            <person name="Larimer F.W."/>
            <person name="Lamerdin J."/>
            <person name="Stoutland P.O."/>
            <person name="Regala W.M."/>
            <person name="Georgescu A.M."/>
            <person name="Vergez L.M."/>
            <person name="Land M.L."/>
            <person name="Motin V.L."/>
            <person name="Brubaker R.R."/>
            <person name="Fowler J."/>
            <person name="Hinnebusch J."/>
            <person name="Marceau M."/>
            <person name="Medigue C."/>
            <person name="Simonet M."/>
            <person name="Chenal-Francisque V."/>
            <person name="Souza B."/>
            <person name="Dacheux D."/>
            <person name="Elliott J.M."/>
            <person name="Derbise A."/>
            <person name="Hauser L.J."/>
            <person name="Garcia E."/>
        </authorList>
    </citation>
    <scope>NUCLEOTIDE SEQUENCE [LARGE SCALE GENOMIC DNA]</scope>
    <source>
        <strain>IP32953</strain>
    </source>
</reference>
<gene>
    <name evidence="1" type="primary">serC</name>
    <name type="ordered locus">YPTB1414</name>
</gene>
<comment type="function">
    <text evidence="1">Catalyzes the reversible conversion of 3-phosphohydroxypyruvate to phosphoserine and of 3-hydroxy-2-oxo-4-phosphonooxybutanoate to phosphohydroxythreonine.</text>
</comment>
<comment type="catalytic activity">
    <reaction evidence="1">
        <text>O-phospho-L-serine + 2-oxoglutarate = 3-phosphooxypyruvate + L-glutamate</text>
        <dbReference type="Rhea" id="RHEA:14329"/>
        <dbReference type="ChEBI" id="CHEBI:16810"/>
        <dbReference type="ChEBI" id="CHEBI:18110"/>
        <dbReference type="ChEBI" id="CHEBI:29985"/>
        <dbReference type="ChEBI" id="CHEBI:57524"/>
        <dbReference type="EC" id="2.6.1.52"/>
    </reaction>
</comment>
<comment type="catalytic activity">
    <reaction evidence="1">
        <text>4-(phosphooxy)-L-threonine + 2-oxoglutarate = (R)-3-hydroxy-2-oxo-4-phosphooxybutanoate + L-glutamate</text>
        <dbReference type="Rhea" id="RHEA:16573"/>
        <dbReference type="ChEBI" id="CHEBI:16810"/>
        <dbReference type="ChEBI" id="CHEBI:29985"/>
        <dbReference type="ChEBI" id="CHEBI:58452"/>
        <dbReference type="ChEBI" id="CHEBI:58538"/>
        <dbReference type="EC" id="2.6.1.52"/>
    </reaction>
</comment>
<comment type="cofactor">
    <cofactor evidence="1">
        <name>pyridoxal 5'-phosphate</name>
        <dbReference type="ChEBI" id="CHEBI:597326"/>
    </cofactor>
    <text evidence="1">Binds 1 pyridoxal phosphate per subunit.</text>
</comment>
<comment type="pathway">
    <text evidence="1">Amino-acid biosynthesis; L-serine biosynthesis; L-serine from 3-phospho-D-glycerate: step 2/3.</text>
</comment>
<comment type="pathway">
    <text evidence="1">Cofactor biosynthesis; pyridoxine 5'-phosphate biosynthesis; pyridoxine 5'-phosphate from D-erythrose 4-phosphate: step 3/5.</text>
</comment>
<comment type="subunit">
    <text evidence="1">Homodimer.</text>
</comment>
<comment type="subcellular location">
    <subcellularLocation>
        <location evidence="1">Cytoplasm</location>
    </subcellularLocation>
</comment>
<comment type="similarity">
    <text evidence="1">Belongs to the class-V pyridoxal-phosphate-dependent aminotransferase family. SerC subfamily.</text>
</comment>
<organism>
    <name type="scientific">Yersinia pseudotuberculosis serotype I (strain IP32953)</name>
    <dbReference type="NCBI Taxonomy" id="273123"/>
    <lineage>
        <taxon>Bacteria</taxon>
        <taxon>Pseudomonadati</taxon>
        <taxon>Pseudomonadota</taxon>
        <taxon>Gammaproteobacteria</taxon>
        <taxon>Enterobacterales</taxon>
        <taxon>Yersiniaceae</taxon>
        <taxon>Yersinia</taxon>
    </lineage>
</organism>
<keyword id="KW-0028">Amino-acid biosynthesis</keyword>
<keyword id="KW-0032">Aminotransferase</keyword>
<keyword id="KW-0963">Cytoplasm</keyword>
<keyword id="KW-0663">Pyridoxal phosphate</keyword>
<keyword id="KW-0664">Pyridoxine biosynthesis</keyword>
<keyword id="KW-0718">Serine biosynthesis</keyword>
<keyword id="KW-0808">Transferase</keyword>
<evidence type="ECO:0000255" key="1">
    <source>
        <dbReference type="HAMAP-Rule" id="MF_00160"/>
    </source>
</evidence>
<dbReference type="EC" id="2.6.1.52" evidence="1"/>
<dbReference type="EMBL" id="BX936398">
    <property type="protein sequence ID" value="CAH20654.1"/>
    <property type="molecule type" value="Genomic_DNA"/>
</dbReference>
<dbReference type="RefSeq" id="WP_011192055.1">
    <property type="nucleotide sequence ID" value="NC_006155.1"/>
</dbReference>
<dbReference type="SMR" id="Q66CI9"/>
<dbReference type="KEGG" id="ypo:BZ17_1104"/>
<dbReference type="KEGG" id="yps:YPTB1414"/>
<dbReference type="PATRIC" id="fig|273123.14.peg.1171"/>
<dbReference type="UniPathway" id="UPA00135">
    <property type="reaction ID" value="UER00197"/>
</dbReference>
<dbReference type="UniPathway" id="UPA00244">
    <property type="reaction ID" value="UER00311"/>
</dbReference>
<dbReference type="Proteomes" id="UP000001011">
    <property type="component" value="Chromosome"/>
</dbReference>
<dbReference type="GO" id="GO:0005737">
    <property type="term" value="C:cytoplasm"/>
    <property type="evidence" value="ECO:0007669"/>
    <property type="project" value="UniProtKB-SubCell"/>
</dbReference>
<dbReference type="GO" id="GO:0004648">
    <property type="term" value="F:O-phospho-L-serine:2-oxoglutarate aminotransferase activity"/>
    <property type="evidence" value="ECO:0007669"/>
    <property type="project" value="UniProtKB-UniRule"/>
</dbReference>
<dbReference type="GO" id="GO:0030170">
    <property type="term" value="F:pyridoxal phosphate binding"/>
    <property type="evidence" value="ECO:0007669"/>
    <property type="project" value="UniProtKB-UniRule"/>
</dbReference>
<dbReference type="GO" id="GO:0006564">
    <property type="term" value="P:L-serine biosynthetic process"/>
    <property type="evidence" value="ECO:0007669"/>
    <property type="project" value="UniProtKB-UniRule"/>
</dbReference>
<dbReference type="GO" id="GO:0008615">
    <property type="term" value="P:pyridoxine biosynthetic process"/>
    <property type="evidence" value="ECO:0007669"/>
    <property type="project" value="UniProtKB-UniRule"/>
</dbReference>
<dbReference type="CDD" id="cd00611">
    <property type="entry name" value="PSAT_like"/>
    <property type="match status" value="1"/>
</dbReference>
<dbReference type="FunFam" id="3.40.640.10:FF:000010">
    <property type="entry name" value="Phosphoserine aminotransferase"/>
    <property type="match status" value="1"/>
</dbReference>
<dbReference type="FunFam" id="3.90.1150.10:FF:000006">
    <property type="entry name" value="Phosphoserine aminotransferase"/>
    <property type="match status" value="1"/>
</dbReference>
<dbReference type="Gene3D" id="3.90.1150.10">
    <property type="entry name" value="Aspartate Aminotransferase, domain 1"/>
    <property type="match status" value="1"/>
</dbReference>
<dbReference type="Gene3D" id="3.40.640.10">
    <property type="entry name" value="Type I PLP-dependent aspartate aminotransferase-like (Major domain)"/>
    <property type="match status" value="1"/>
</dbReference>
<dbReference type="HAMAP" id="MF_00160">
    <property type="entry name" value="SerC_aminotrans_5"/>
    <property type="match status" value="1"/>
</dbReference>
<dbReference type="InterPro" id="IPR000192">
    <property type="entry name" value="Aminotrans_V_dom"/>
</dbReference>
<dbReference type="InterPro" id="IPR020578">
    <property type="entry name" value="Aminotrans_V_PyrdxlP_BS"/>
</dbReference>
<dbReference type="InterPro" id="IPR022278">
    <property type="entry name" value="Pser_aminoTfrase"/>
</dbReference>
<dbReference type="InterPro" id="IPR015424">
    <property type="entry name" value="PyrdxlP-dep_Trfase"/>
</dbReference>
<dbReference type="InterPro" id="IPR015421">
    <property type="entry name" value="PyrdxlP-dep_Trfase_major"/>
</dbReference>
<dbReference type="InterPro" id="IPR015422">
    <property type="entry name" value="PyrdxlP-dep_Trfase_small"/>
</dbReference>
<dbReference type="NCBIfam" id="NF003764">
    <property type="entry name" value="PRK05355.1"/>
    <property type="match status" value="1"/>
</dbReference>
<dbReference type="NCBIfam" id="TIGR01364">
    <property type="entry name" value="serC_1"/>
    <property type="match status" value="1"/>
</dbReference>
<dbReference type="PANTHER" id="PTHR43247">
    <property type="entry name" value="PHOSPHOSERINE AMINOTRANSFERASE"/>
    <property type="match status" value="1"/>
</dbReference>
<dbReference type="PANTHER" id="PTHR43247:SF1">
    <property type="entry name" value="PHOSPHOSERINE AMINOTRANSFERASE"/>
    <property type="match status" value="1"/>
</dbReference>
<dbReference type="Pfam" id="PF00266">
    <property type="entry name" value="Aminotran_5"/>
    <property type="match status" value="1"/>
</dbReference>
<dbReference type="PIRSF" id="PIRSF000525">
    <property type="entry name" value="SerC"/>
    <property type="match status" value="1"/>
</dbReference>
<dbReference type="SUPFAM" id="SSF53383">
    <property type="entry name" value="PLP-dependent transferases"/>
    <property type="match status" value="1"/>
</dbReference>
<dbReference type="PROSITE" id="PS00595">
    <property type="entry name" value="AA_TRANSFER_CLASS_5"/>
    <property type="match status" value="1"/>
</dbReference>
<name>SERC_YERPS</name>
<feature type="chain" id="PRO_0000150228" description="Phosphoserine aminotransferase">
    <location>
        <begin position="1"/>
        <end position="361"/>
    </location>
</feature>
<feature type="binding site" evidence="1">
    <location>
        <position position="42"/>
    </location>
    <ligand>
        <name>L-glutamate</name>
        <dbReference type="ChEBI" id="CHEBI:29985"/>
    </ligand>
</feature>
<feature type="binding site" evidence="1">
    <location>
        <begin position="76"/>
        <end position="77"/>
    </location>
    <ligand>
        <name>pyridoxal 5'-phosphate</name>
        <dbReference type="ChEBI" id="CHEBI:597326"/>
    </ligand>
</feature>
<feature type="binding site" evidence="1">
    <location>
        <position position="102"/>
    </location>
    <ligand>
        <name>pyridoxal 5'-phosphate</name>
        <dbReference type="ChEBI" id="CHEBI:597326"/>
    </ligand>
</feature>
<feature type="binding site" evidence="1">
    <location>
        <position position="153"/>
    </location>
    <ligand>
        <name>pyridoxal 5'-phosphate</name>
        <dbReference type="ChEBI" id="CHEBI:597326"/>
    </ligand>
</feature>
<feature type="binding site" evidence="1">
    <location>
        <position position="173"/>
    </location>
    <ligand>
        <name>pyridoxal 5'-phosphate</name>
        <dbReference type="ChEBI" id="CHEBI:597326"/>
    </ligand>
</feature>
<feature type="binding site" evidence="1">
    <location>
        <position position="196"/>
    </location>
    <ligand>
        <name>pyridoxal 5'-phosphate</name>
        <dbReference type="ChEBI" id="CHEBI:597326"/>
    </ligand>
</feature>
<feature type="binding site" evidence="1">
    <location>
        <begin position="238"/>
        <end position="239"/>
    </location>
    <ligand>
        <name>pyridoxal 5'-phosphate</name>
        <dbReference type="ChEBI" id="CHEBI:597326"/>
    </ligand>
</feature>
<feature type="modified residue" description="N6-(pyridoxal phosphate)lysine" evidence="1">
    <location>
        <position position="197"/>
    </location>
</feature>
<proteinExistence type="inferred from homology"/>